<evidence type="ECO:0000255" key="1">
    <source>
        <dbReference type="HAMAP-Rule" id="MF_00493"/>
    </source>
</evidence>
<proteinExistence type="inferred from homology"/>
<comment type="function">
    <text evidence="1">Transaldolase is important for the balance of metabolites in the pentose-phosphate pathway.</text>
</comment>
<comment type="catalytic activity">
    <reaction evidence="1">
        <text>D-sedoheptulose 7-phosphate + D-glyceraldehyde 3-phosphate = D-erythrose 4-phosphate + beta-D-fructose 6-phosphate</text>
        <dbReference type="Rhea" id="RHEA:17053"/>
        <dbReference type="ChEBI" id="CHEBI:16897"/>
        <dbReference type="ChEBI" id="CHEBI:57483"/>
        <dbReference type="ChEBI" id="CHEBI:57634"/>
        <dbReference type="ChEBI" id="CHEBI:59776"/>
        <dbReference type="EC" id="2.2.1.2"/>
    </reaction>
</comment>
<comment type="pathway">
    <text evidence="1">Carbohydrate degradation; pentose phosphate pathway; D-glyceraldehyde 3-phosphate and beta-D-fructose 6-phosphate from D-ribose 5-phosphate and D-xylulose 5-phosphate (non-oxidative stage): step 2/3.</text>
</comment>
<comment type="subcellular location">
    <subcellularLocation>
        <location evidence="1">Cytoplasm</location>
    </subcellularLocation>
</comment>
<comment type="similarity">
    <text evidence="1">Belongs to the transaldolase family. Type 2 subfamily.</text>
</comment>
<accession>A7H591</accession>
<protein>
    <recommendedName>
        <fullName evidence="1">Transaldolase</fullName>
        <ecNumber evidence="1">2.2.1.2</ecNumber>
    </recommendedName>
</protein>
<dbReference type="EC" id="2.2.1.2" evidence="1"/>
<dbReference type="EMBL" id="CP000768">
    <property type="protein sequence ID" value="ABS43309.1"/>
    <property type="molecule type" value="Genomic_DNA"/>
</dbReference>
<dbReference type="SMR" id="A7H591"/>
<dbReference type="KEGG" id="cjd:JJD26997_1690"/>
<dbReference type="HOGENOM" id="CLU_050771_1_0_7"/>
<dbReference type="UniPathway" id="UPA00115">
    <property type="reaction ID" value="UER00414"/>
</dbReference>
<dbReference type="Proteomes" id="UP000002302">
    <property type="component" value="Chromosome"/>
</dbReference>
<dbReference type="GO" id="GO:0005737">
    <property type="term" value="C:cytoplasm"/>
    <property type="evidence" value="ECO:0007669"/>
    <property type="project" value="UniProtKB-SubCell"/>
</dbReference>
<dbReference type="GO" id="GO:0004801">
    <property type="term" value="F:transaldolase activity"/>
    <property type="evidence" value="ECO:0007669"/>
    <property type="project" value="UniProtKB-UniRule"/>
</dbReference>
<dbReference type="GO" id="GO:0005975">
    <property type="term" value="P:carbohydrate metabolic process"/>
    <property type="evidence" value="ECO:0007669"/>
    <property type="project" value="InterPro"/>
</dbReference>
<dbReference type="GO" id="GO:0006098">
    <property type="term" value="P:pentose-phosphate shunt"/>
    <property type="evidence" value="ECO:0007669"/>
    <property type="project" value="UniProtKB-UniRule"/>
</dbReference>
<dbReference type="CDD" id="cd00955">
    <property type="entry name" value="Transaldolase_like"/>
    <property type="match status" value="1"/>
</dbReference>
<dbReference type="Gene3D" id="3.20.20.70">
    <property type="entry name" value="Aldolase class I"/>
    <property type="match status" value="1"/>
</dbReference>
<dbReference type="HAMAP" id="MF_00493">
    <property type="entry name" value="Transaldolase_2"/>
    <property type="match status" value="1"/>
</dbReference>
<dbReference type="InterPro" id="IPR013785">
    <property type="entry name" value="Aldolase_TIM"/>
</dbReference>
<dbReference type="InterPro" id="IPR001585">
    <property type="entry name" value="TAL/FSA"/>
</dbReference>
<dbReference type="InterPro" id="IPR004732">
    <property type="entry name" value="Transaldolase_2"/>
</dbReference>
<dbReference type="InterPro" id="IPR018225">
    <property type="entry name" value="Transaldolase_AS"/>
</dbReference>
<dbReference type="NCBIfam" id="NF003026">
    <property type="entry name" value="PRK03903.1"/>
    <property type="match status" value="1"/>
</dbReference>
<dbReference type="NCBIfam" id="TIGR00876">
    <property type="entry name" value="tal_mycobact"/>
    <property type="match status" value="1"/>
</dbReference>
<dbReference type="PANTHER" id="PTHR10683">
    <property type="entry name" value="TRANSALDOLASE"/>
    <property type="match status" value="1"/>
</dbReference>
<dbReference type="PANTHER" id="PTHR10683:SF31">
    <property type="entry name" value="TRANSALDOLASE"/>
    <property type="match status" value="1"/>
</dbReference>
<dbReference type="Pfam" id="PF00923">
    <property type="entry name" value="TAL_FSA"/>
    <property type="match status" value="1"/>
</dbReference>
<dbReference type="PIRSF" id="PIRSF036915">
    <property type="entry name" value="Trnald_Bac_Plnt"/>
    <property type="match status" value="1"/>
</dbReference>
<dbReference type="SUPFAM" id="SSF51569">
    <property type="entry name" value="Aldolase"/>
    <property type="match status" value="1"/>
</dbReference>
<dbReference type="PROSITE" id="PS01054">
    <property type="entry name" value="TRANSALDOLASE_1"/>
    <property type="match status" value="1"/>
</dbReference>
<feature type="chain" id="PRO_1000026520" description="Transaldolase">
    <location>
        <begin position="1"/>
        <end position="325"/>
    </location>
</feature>
<feature type="active site" description="Schiff-base intermediate with substrate" evidence="1">
    <location>
        <position position="125"/>
    </location>
</feature>
<gene>
    <name evidence="1" type="primary">tal</name>
    <name type="ordered locus">JJD26997_1690</name>
</gene>
<name>TAL_CAMJD</name>
<keyword id="KW-0963">Cytoplasm</keyword>
<keyword id="KW-0570">Pentose shunt</keyword>
<keyword id="KW-0704">Schiff base</keyword>
<keyword id="KW-0808">Transferase</keyword>
<reference key="1">
    <citation type="submission" date="2007-07" db="EMBL/GenBank/DDBJ databases">
        <title>Complete genome sequence of Campylobacter jejuni subsp doylei 269.97 isolated from human blood.</title>
        <authorList>
            <person name="Fouts D.E."/>
            <person name="Mongodin E.F."/>
            <person name="Puiu D."/>
            <person name="Sebastian Y."/>
            <person name="Miller W.G."/>
            <person name="Mandrell R.E."/>
            <person name="Lastovica A.J."/>
            <person name="Nelson K.E."/>
        </authorList>
    </citation>
    <scope>NUCLEOTIDE SEQUENCE [LARGE SCALE GENOMIC DNA]</scope>
    <source>
        <strain>ATCC BAA-1458 / RM4099 / 269.97</strain>
    </source>
</reference>
<sequence length="325" mass="36852">MKNFSLWCDFIENSFLDNEFLNLLSHEINGATSNPAIFKNAILNSPIYKDKILKLKGKKTKDIYEELAISDIQKAADKLAPLFYQKNDGFISIEIDPRLHDNTTLSLGEAKRLYSAIGKENVMIKIPATKASYEVMYELMKNGISVNATLIFSLEQSQKCFEALNAGLVEFRKNNIALKEQNTRTPQAVISIFVSRFDRLLNPKTKEQNRIGILNANLAYNNIYSKNEPNIRALFASTGVKGDNLPKDYYIKELLFENSVNTAPLDAIEAFKGKMDFKKPLMNFEIYTALNQIISQSEREKACNDLLSDGIEQFCIAFEDILKAL</sequence>
<organism>
    <name type="scientific">Campylobacter jejuni subsp. doylei (strain ATCC BAA-1458 / RM4099 / 269.97)</name>
    <dbReference type="NCBI Taxonomy" id="360109"/>
    <lineage>
        <taxon>Bacteria</taxon>
        <taxon>Pseudomonadati</taxon>
        <taxon>Campylobacterota</taxon>
        <taxon>Epsilonproteobacteria</taxon>
        <taxon>Campylobacterales</taxon>
        <taxon>Campylobacteraceae</taxon>
        <taxon>Campylobacter</taxon>
    </lineage>
</organism>